<keyword id="KW-0012">Acyltransferase</keyword>
<keyword id="KW-1003">Cell membrane</keyword>
<keyword id="KW-0472">Membrane</keyword>
<keyword id="KW-1185">Reference proteome</keyword>
<keyword id="KW-0808">Transferase</keyword>
<keyword id="KW-0812">Transmembrane</keyword>
<keyword id="KW-1133">Transmembrane helix</keyword>
<reference key="1">
    <citation type="journal article" date="1997" name="Microbiology">
        <title>Sequence of the Bacillus subtilis genome region in the vicinity of the lev operon reveals two new extracytoplasmic function RNA polymerase sigma factors SigV and SigZ.</title>
        <authorList>
            <person name="Sorokin A."/>
            <person name="Bolotin A."/>
            <person name="Purnelle B."/>
            <person name="Hilbert H."/>
            <person name="Lauber J."/>
            <person name="Duesterhoeft A."/>
            <person name="Ehrlich S.D."/>
        </authorList>
    </citation>
    <scope>NUCLEOTIDE SEQUENCE [GENOMIC DNA]</scope>
    <source>
        <strain>168</strain>
    </source>
</reference>
<reference key="2">
    <citation type="journal article" date="1997" name="Nature">
        <title>The complete genome sequence of the Gram-positive bacterium Bacillus subtilis.</title>
        <authorList>
            <person name="Kunst F."/>
            <person name="Ogasawara N."/>
            <person name="Moszer I."/>
            <person name="Albertini A.M."/>
            <person name="Alloni G."/>
            <person name="Azevedo V."/>
            <person name="Bertero M.G."/>
            <person name="Bessieres P."/>
            <person name="Bolotin A."/>
            <person name="Borchert S."/>
            <person name="Borriss R."/>
            <person name="Boursier L."/>
            <person name="Brans A."/>
            <person name="Braun M."/>
            <person name="Brignell S.C."/>
            <person name="Bron S."/>
            <person name="Brouillet S."/>
            <person name="Bruschi C.V."/>
            <person name="Caldwell B."/>
            <person name="Capuano V."/>
            <person name="Carter N.M."/>
            <person name="Choi S.-K."/>
            <person name="Codani J.-J."/>
            <person name="Connerton I.F."/>
            <person name="Cummings N.J."/>
            <person name="Daniel R.A."/>
            <person name="Denizot F."/>
            <person name="Devine K.M."/>
            <person name="Duesterhoeft A."/>
            <person name="Ehrlich S.D."/>
            <person name="Emmerson P.T."/>
            <person name="Entian K.-D."/>
            <person name="Errington J."/>
            <person name="Fabret C."/>
            <person name="Ferrari E."/>
            <person name="Foulger D."/>
            <person name="Fritz C."/>
            <person name="Fujita M."/>
            <person name="Fujita Y."/>
            <person name="Fuma S."/>
            <person name="Galizzi A."/>
            <person name="Galleron N."/>
            <person name="Ghim S.-Y."/>
            <person name="Glaser P."/>
            <person name="Goffeau A."/>
            <person name="Golightly E.J."/>
            <person name="Grandi G."/>
            <person name="Guiseppi G."/>
            <person name="Guy B.J."/>
            <person name="Haga K."/>
            <person name="Haiech J."/>
            <person name="Harwood C.R."/>
            <person name="Henaut A."/>
            <person name="Hilbert H."/>
            <person name="Holsappel S."/>
            <person name="Hosono S."/>
            <person name="Hullo M.-F."/>
            <person name="Itaya M."/>
            <person name="Jones L.-M."/>
            <person name="Joris B."/>
            <person name="Karamata D."/>
            <person name="Kasahara Y."/>
            <person name="Klaerr-Blanchard M."/>
            <person name="Klein C."/>
            <person name="Kobayashi Y."/>
            <person name="Koetter P."/>
            <person name="Koningstein G."/>
            <person name="Krogh S."/>
            <person name="Kumano M."/>
            <person name="Kurita K."/>
            <person name="Lapidus A."/>
            <person name="Lardinois S."/>
            <person name="Lauber J."/>
            <person name="Lazarevic V."/>
            <person name="Lee S.-M."/>
            <person name="Levine A."/>
            <person name="Liu H."/>
            <person name="Masuda S."/>
            <person name="Mauel C."/>
            <person name="Medigue C."/>
            <person name="Medina N."/>
            <person name="Mellado R.P."/>
            <person name="Mizuno M."/>
            <person name="Moestl D."/>
            <person name="Nakai S."/>
            <person name="Noback M."/>
            <person name="Noone D."/>
            <person name="O'Reilly M."/>
            <person name="Ogawa K."/>
            <person name="Ogiwara A."/>
            <person name="Oudega B."/>
            <person name="Park S.-H."/>
            <person name="Parro V."/>
            <person name="Pohl T.M."/>
            <person name="Portetelle D."/>
            <person name="Porwollik S."/>
            <person name="Prescott A.M."/>
            <person name="Presecan E."/>
            <person name="Pujic P."/>
            <person name="Purnelle B."/>
            <person name="Rapoport G."/>
            <person name="Rey M."/>
            <person name="Reynolds S."/>
            <person name="Rieger M."/>
            <person name="Rivolta C."/>
            <person name="Rocha E."/>
            <person name="Roche B."/>
            <person name="Rose M."/>
            <person name="Sadaie Y."/>
            <person name="Sato T."/>
            <person name="Scanlan E."/>
            <person name="Schleich S."/>
            <person name="Schroeter R."/>
            <person name="Scoffone F."/>
            <person name="Sekiguchi J."/>
            <person name="Sekowska A."/>
            <person name="Seror S.J."/>
            <person name="Serror P."/>
            <person name="Shin B.-S."/>
            <person name="Soldo B."/>
            <person name="Sorokin A."/>
            <person name="Tacconi E."/>
            <person name="Takagi T."/>
            <person name="Takahashi H."/>
            <person name="Takemaru K."/>
            <person name="Takeuchi M."/>
            <person name="Tamakoshi A."/>
            <person name="Tanaka T."/>
            <person name="Terpstra P."/>
            <person name="Tognoni A."/>
            <person name="Tosato V."/>
            <person name="Uchiyama S."/>
            <person name="Vandenbol M."/>
            <person name="Vannier F."/>
            <person name="Vassarotti A."/>
            <person name="Viari A."/>
            <person name="Wambutt R."/>
            <person name="Wedler E."/>
            <person name="Wedler H."/>
            <person name="Weitzenegger T."/>
            <person name="Winters P."/>
            <person name="Wipat A."/>
            <person name="Yamamoto H."/>
            <person name="Yamane K."/>
            <person name="Yasumoto K."/>
            <person name="Yata K."/>
            <person name="Yoshida K."/>
            <person name="Yoshikawa H.-F."/>
            <person name="Zumstein E."/>
            <person name="Yoshikawa H."/>
            <person name="Danchin A."/>
        </authorList>
    </citation>
    <scope>NUCLEOTIDE SEQUENCE [LARGE SCALE GENOMIC DNA]</scope>
    <source>
        <strain>168</strain>
    </source>
</reference>
<comment type="subcellular location">
    <subcellularLocation>
        <location evidence="1">Cell membrane</location>
        <topology evidence="1">Multi-pass membrane protein</topology>
    </subcellularLocation>
</comment>
<comment type="similarity">
    <text evidence="4">Belongs to the acyltransferase 3 family.</text>
</comment>
<organism>
    <name type="scientific">Bacillus subtilis (strain 168)</name>
    <dbReference type="NCBI Taxonomy" id="224308"/>
    <lineage>
        <taxon>Bacteria</taxon>
        <taxon>Bacillati</taxon>
        <taxon>Bacillota</taxon>
        <taxon>Bacilli</taxon>
        <taxon>Bacillales</taxon>
        <taxon>Bacillaceae</taxon>
        <taxon>Bacillus</taxon>
    </lineage>
</organism>
<evidence type="ECO:0000250" key="1"/>
<evidence type="ECO:0000255" key="2"/>
<evidence type="ECO:0000256" key="3">
    <source>
        <dbReference type="SAM" id="MobiDB-lite"/>
    </source>
</evidence>
<evidence type="ECO:0000305" key="4"/>
<accession>O05402</accession>
<accession>Q795Y7</accession>
<dbReference type="EC" id="2.3.1.-"/>
<dbReference type="EMBL" id="U93874">
    <property type="protein sequence ID" value="AAB80869.1"/>
    <property type="molecule type" value="Genomic_DNA"/>
</dbReference>
<dbReference type="EMBL" id="AL009126">
    <property type="protein sequence ID" value="CAB14656.1"/>
    <property type="molecule type" value="Genomic_DNA"/>
</dbReference>
<dbReference type="PIR" id="C69975">
    <property type="entry name" value="C69975"/>
</dbReference>
<dbReference type="SMR" id="O05402"/>
<dbReference type="FunCoup" id="O05402">
    <property type="interactions" value="149"/>
</dbReference>
<dbReference type="STRING" id="224308.BSU27140"/>
<dbReference type="PaxDb" id="224308-BSU27140"/>
<dbReference type="EnsemblBacteria" id="CAB14656">
    <property type="protein sequence ID" value="CAB14656"/>
    <property type="gene ID" value="BSU_27140"/>
</dbReference>
<dbReference type="GeneID" id="936583"/>
<dbReference type="KEGG" id="bsu:BSU27140"/>
<dbReference type="PATRIC" id="fig|224308.179.peg.2947"/>
<dbReference type="eggNOG" id="COG1835">
    <property type="taxonomic scope" value="Bacteria"/>
</dbReference>
<dbReference type="eggNOG" id="COG2755">
    <property type="taxonomic scope" value="Bacteria"/>
</dbReference>
<dbReference type="InParanoid" id="O05402"/>
<dbReference type="OrthoDB" id="9796461at2"/>
<dbReference type="PhylomeDB" id="O05402"/>
<dbReference type="BioCyc" id="BSUB:BSU27140-MONOMER"/>
<dbReference type="Proteomes" id="UP000001570">
    <property type="component" value="Chromosome"/>
</dbReference>
<dbReference type="GO" id="GO:0016020">
    <property type="term" value="C:membrane"/>
    <property type="evidence" value="ECO:0000318"/>
    <property type="project" value="GO_Central"/>
</dbReference>
<dbReference type="GO" id="GO:0005886">
    <property type="term" value="C:plasma membrane"/>
    <property type="evidence" value="ECO:0007669"/>
    <property type="project" value="UniProtKB-SubCell"/>
</dbReference>
<dbReference type="GO" id="GO:0016747">
    <property type="term" value="F:acyltransferase activity, transferring groups other than amino-acyl groups"/>
    <property type="evidence" value="ECO:0007669"/>
    <property type="project" value="InterPro"/>
</dbReference>
<dbReference type="GO" id="GO:0009103">
    <property type="term" value="P:lipopolysaccharide biosynthetic process"/>
    <property type="evidence" value="ECO:0000318"/>
    <property type="project" value="GO_Central"/>
</dbReference>
<dbReference type="CDD" id="cd01840">
    <property type="entry name" value="SGNH_hydrolase_yrhL_like"/>
    <property type="match status" value="1"/>
</dbReference>
<dbReference type="FunFam" id="3.40.50.1110:FF:000006">
    <property type="entry name" value="O-acetyltransferase OatA"/>
    <property type="match status" value="1"/>
</dbReference>
<dbReference type="Gene3D" id="3.40.50.1110">
    <property type="entry name" value="SGNH hydrolase"/>
    <property type="match status" value="1"/>
</dbReference>
<dbReference type="InterPro" id="IPR002656">
    <property type="entry name" value="Acyl_transf_3_dom"/>
</dbReference>
<dbReference type="InterPro" id="IPR050879">
    <property type="entry name" value="Acyltransferase_3"/>
</dbReference>
<dbReference type="InterPro" id="IPR036514">
    <property type="entry name" value="SGNH_hydro_sf"/>
</dbReference>
<dbReference type="PANTHER" id="PTHR23028">
    <property type="entry name" value="ACETYLTRANSFERASE"/>
    <property type="match status" value="1"/>
</dbReference>
<dbReference type="PANTHER" id="PTHR23028:SF53">
    <property type="entry name" value="ACYL_TRANSF_3 DOMAIN-CONTAINING PROTEIN"/>
    <property type="match status" value="1"/>
</dbReference>
<dbReference type="Pfam" id="PF01757">
    <property type="entry name" value="Acyl_transf_3"/>
    <property type="match status" value="1"/>
</dbReference>
<dbReference type="SUPFAM" id="SSF52266">
    <property type="entry name" value="SGNH hydrolase"/>
    <property type="match status" value="1"/>
</dbReference>
<proteinExistence type="inferred from homology"/>
<protein>
    <recommendedName>
        <fullName>Putative peptidoglycan O-acetyltransferase YrhL</fullName>
        <ecNumber>2.3.1.-</ecNumber>
    </recommendedName>
</protein>
<gene>
    <name type="primary">yrhL</name>
    <name type="ordered locus">BSU27140</name>
</gene>
<sequence>MYHKTQHHRYIPGLDGLRAFAVLSVITYHLNFNWANGGFIGVDIFFVLSGYLITSILLPAYGNDINLDFRDFWVRRIRRLLPAAYLMIFSTVVWVVLFDRELLHTVRGDAISSLFYMSNWWFIFHKLSYFDSFGSPSPLKNLWSLAIEEQFYIIWPMFLVVGMYIMKSRARLAAVISLLVLCSAVMMSVLYEPGGDPSRVYYGTDTRSFELLIGCALALVWPMKRLSSNRLPSKLKHTLHATEFLAFCILVLCVYFTDEYEPFLYRGGMLFISVTAAILIACVCHPSSFLGNLLSWRPLRWLGTRSYGIYLWHYPVIVLSTPVQEIGNPVFWHIVLKVIVTCILAELSYHFIEKPIRTQGFRSFSRRVFIHRIKEWKTTSVISKMSIGFIIFAILIFAGGLSGLAGEQKHPTKWTYSSQETNADTSQASGDKKNAAADKKHNPEQKTTDSNQGQKENKDSGQETHKKKDTQSQQLKKPADTAKEVLAIGDSVMLDISSHLRQSFSNVTIDGKVGRQMSQALELAREYKSFNQPNKAVIIELGTNGYFTNSQIEQLLQSFSKAHIYLVNTRVPRQWESKVNESLQQQAHAHQNVTLVDWHTEALQHPEYFTPDGVHLVPKGAKTLTALIVQAMKS</sequence>
<name>YRHL_BACSU</name>
<feature type="chain" id="PRO_0000360823" description="Putative peptidoglycan O-acetyltransferase YrhL">
    <location>
        <begin position="1"/>
        <end position="634"/>
    </location>
</feature>
<feature type="transmembrane region" description="Helical" evidence="2">
    <location>
        <begin position="10"/>
        <end position="30"/>
    </location>
</feature>
<feature type="transmembrane region" description="Helical" evidence="2">
    <location>
        <begin position="38"/>
        <end position="58"/>
    </location>
</feature>
<feature type="transmembrane region" description="Helical" evidence="2">
    <location>
        <begin position="79"/>
        <end position="99"/>
    </location>
</feature>
<feature type="transmembrane region" description="Helical" evidence="2">
    <location>
        <begin position="110"/>
        <end position="130"/>
    </location>
</feature>
<feature type="transmembrane region" description="Helical" evidence="2">
    <location>
        <begin position="145"/>
        <end position="165"/>
    </location>
</feature>
<feature type="transmembrane region" description="Helical" evidence="2">
    <location>
        <begin position="172"/>
        <end position="192"/>
    </location>
</feature>
<feature type="transmembrane region" description="Helical" evidence="2">
    <location>
        <begin position="244"/>
        <end position="264"/>
    </location>
</feature>
<feature type="transmembrane region" description="Helical" evidence="2">
    <location>
        <begin position="270"/>
        <end position="290"/>
    </location>
</feature>
<feature type="transmembrane region" description="Helical" evidence="2">
    <location>
        <begin position="307"/>
        <end position="327"/>
    </location>
</feature>
<feature type="transmembrane region" description="Helical" evidence="2">
    <location>
        <begin position="329"/>
        <end position="349"/>
    </location>
</feature>
<feature type="transmembrane region" description="Helical" evidence="2">
    <location>
        <begin position="385"/>
        <end position="405"/>
    </location>
</feature>
<feature type="region of interest" description="Disordered" evidence="3">
    <location>
        <begin position="413"/>
        <end position="481"/>
    </location>
</feature>
<feature type="compositionally biased region" description="Polar residues" evidence="3">
    <location>
        <begin position="414"/>
        <end position="429"/>
    </location>
</feature>
<feature type="compositionally biased region" description="Basic and acidic residues" evidence="3">
    <location>
        <begin position="430"/>
        <end position="447"/>
    </location>
</feature>
<feature type="compositionally biased region" description="Basic and acidic residues" evidence="3">
    <location>
        <begin position="455"/>
        <end position="470"/>
    </location>
</feature>